<dbReference type="EMBL" id="X67119">
    <property type="protein sequence ID" value="CAA47576.1"/>
    <property type="molecule type" value="Genomic_DNA"/>
</dbReference>
<dbReference type="EMBL" id="S55844">
    <property type="protein sequence ID" value="AAB24673.1"/>
    <property type="molecule type" value="Genomic_DNA"/>
</dbReference>
<dbReference type="EMBL" id="X69198">
    <property type="protein sequence ID" value="CAA49018.1"/>
    <property type="molecule type" value="Genomic_DNA"/>
</dbReference>
<dbReference type="PIR" id="S33091">
    <property type="entry name" value="S33091"/>
</dbReference>
<dbReference type="SMR" id="P0DOU1"/>
<dbReference type="KEGG" id="vg:1486474"/>
<dbReference type="Proteomes" id="UP000002060">
    <property type="component" value="Segment"/>
</dbReference>
<dbReference type="GO" id="GO:0016020">
    <property type="term" value="C:membrane"/>
    <property type="evidence" value="ECO:0007669"/>
    <property type="project" value="UniProtKB-KW"/>
</dbReference>
<dbReference type="GO" id="GO:0019031">
    <property type="term" value="C:viral envelope"/>
    <property type="evidence" value="ECO:0007669"/>
    <property type="project" value="UniProtKB-KW"/>
</dbReference>
<dbReference type="GO" id="GO:0055036">
    <property type="term" value="C:virion membrane"/>
    <property type="evidence" value="ECO:0007669"/>
    <property type="project" value="UniProtKB-SubCell"/>
</dbReference>
<dbReference type="GO" id="GO:0019064">
    <property type="term" value="P:fusion of virus membrane with host plasma membrane"/>
    <property type="evidence" value="ECO:0007669"/>
    <property type="project" value="UniProtKB-KW"/>
</dbReference>
<dbReference type="GO" id="GO:0046718">
    <property type="term" value="P:symbiont entry into host cell"/>
    <property type="evidence" value="ECO:0007669"/>
    <property type="project" value="UniProtKB-KW"/>
</dbReference>
<dbReference type="InterPro" id="IPR006956">
    <property type="entry name" value="Poxvirus_L5"/>
</dbReference>
<dbReference type="Pfam" id="PF04872">
    <property type="entry name" value="Pox_L5"/>
    <property type="match status" value="1"/>
</dbReference>
<feature type="chain" id="PRO_0000099628" description="Entry-fusion complex protein OPG094">
    <location>
        <begin position="1"/>
        <end position="128"/>
    </location>
</feature>
<feature type="topological domain" description="Intravirion" evidence="2">
    <location>
        <begin position="1"/>
        <end position="30"/>
    </location>
</feature>
<feature type="transmembrane region" description="Helical; Signal-anchor for type III membrane protein" evidence="2">
    <location>
        <begin position="31"/>
        <end position="51"/>
    </location>
</feature>
<feature type="topological domain" description="Virion surface" evidence="2">
    <location>
        <begin position="52"/>
        <end position="107"/>
    </location>
</feature>
<feature type="disulfide bond" description="By viral enzyme" evidence="1">
    <location>
        <begin position="75"/>
        <end position="107"/>
    </location>
</feature>
<organismHost>
    <name type="scientific">Homo sapiens</name>
    <name type="common">Human</name>
    <dbReference type="NCBI Taxonomy" id="9606"/>
</organismHost>
<sequence length="128" mass="15066">MENVPNVYFNPVFIEPTFKHSLLSVYKHRLIVLFEVFVVFILIYVFFRSELNMFFMHKRKIPDPIDRLRRANLACEDDKLMIYGLPWITTQTSALSINSKPIVYKDCAKLLRSINGSQPVSLNDVLRR</sequence>
<proteinExistence type="inferred from homology"/>
<name>PG099_VAR67</name>
<evidence type="ECO:0000250" key="1">
    <source>
        <dbReference type="UniProtKB" id="P68623"/>
    </source>
</evidence>
<evidence type="ECO:0000255" key="2"/>
<evidence type="ECO:0000305" key="3"/>
<organism>
    <name type="scientific">Variola virus (isolate Human/India/Ind3/1967)</name>
    <name type="common">VARV</name>
    <name type="synonym">Smallpox virus</name>
    <dbReference type="NCBI Taxonomy" id="587200"/>
    <lineage>
        <taxon>Viruses</taxon>
        <taxon>Varidnaviria</taxon>
        <taxon>Bamfordvirae</taxon>
        <taxon>Nucleocytoviricota</taxon>
        <taxon>Pokkesviricetes</taxon>
        <taxon>Chitovirales</taxon>
        <taxon>Poxviridae</taxon>
        <taxon>Chordopoxvirinae</taxon>
        <taxon>Orthopoxvirus</taxon>
        <taxon>Variola virus</taxon>
    </lineage>
</organism>
<comment type="function">
    <text evidence="1">Component of the entry fusion complex (EFC), which consists of 11 proteins. During cell infection, this complex mediates entry of the virion core into the host cytoplasm by a two-step mechanism consisting of lipid mixing of the viral and cellular membranes and subsequent pore formation.</text>
</comment>
<comment type="subunit">
    <text evidence="1">Interacts with OPG086. Component of the entry fusion complex (EFC) composed of OPG053, OPG076, OPG086, OPG094, OPG095, OPG099, OPG107, OPG143, OPG104J5, OPG147 and OPG155. Except for OPG095 and OPG053, each of the EFC proteins is required for assembly or stability of the complex.</text>
</comment>
<comment type="subcellular location">
    <subcellularLocation>
        <location evidence="1">Virion membrane</location>
        <topology evidence="1">Single-pass type III membrane protein</topology>
    </subcellularLocation>
    <text evidence="1">Component of the mature virion (MV) membrane. The mature virion is located in the cytoplasm of infected cells and is probably released by cell lysis.</text>
</comment>
<comment type="induction">
    <text evidence="1">Expressed in the late phase of the viral replicative cycle.</text>
</comment>
<comment type="PTM">
    <text evidence="1">Most cysteines are linked by disulfide bonds. They are created by the viral disulfide bond formation pathway, a poxvirus-specific redox pathway that operates on the cytoplasmic side of the MV membranes.</text>
</comment>
<comment type="PTM">
    <text evidence="1">Unglycosylated because produced in viral factories instead of the classic ER -Golgi route.</text>
</comment>
<comment type="similarity">
    <text evidence="3">Belongs to the orthopoxvirus OPG099 family.</text>
</comment>
<gene>
    <name type="primary">OPG099</name>
    <name type="ORF">L5R</name>
</gene>
<keyword id="KW-1015">Disulfide bond</keyword>
<keyword id="KW-1169">Fusion of virus membrane with host cell membrane</keyword>
<keyword id="KW-1168">Fusion of virus membrane with host membrane</keyword>
<keyword id="KW-0426">Late protein</keyword>
<keyword id="KW-0472">Membrane</keyword>
<keyword id="KW-1185">Reference proteome</keyword>
<keyword id="KW-0735">Signal-anchor</keyword>
<keyword id="KW-0812">Transmembrane</keyword>
<keyword id="KW-1133">Transmembrane helix</keyword>
<keyword id="KW-0261">Viral envelope protein</keyword>
<keyword id="KW-1162">Viral penetration into host cytoplasm</keyword>
<keyword id="KW-0946">Virion</keyword>
<keyword id="KW-1160">Virus entry into host cell</keyword>
<accession>P0DOU1</accession>
<accession>P33043</accession>
<protein>
    <recommendedName>
        <fullName>Entry-fusion complex protein OPG094</fullName>
        <shortName>EFC protein OPG094</shortName>
    </recommendedName>
    <alternativeName>
        <fullName>Protein L5</fullName>
    </alternativeName>
</protein>
<reference key="1">
    <citation type="journal article" date="1993" name="Virus Res.">
        <title>Nucleotide sequence analysis of variola virus HindIII M, L, I genome fragments.</title>
        <authorList>
            <person name="Shchelkunov S.N."/>
            <person name="Blinov V.M."/>
            <person name="Totmenin A.V."/>
            <person name="Marennikova S.S."/>
            <person name="Kolykhalov A.A."/>
            <person name="Frolov I.V."/>
            <person name="Chizhikov V.E."/>
            <person name="Gytorov V.V."/>
            <person name="Gashikov P.V."/>
            <person name="Belanov E.F."/>
            <person name="Belavin P.A."/>
            <person name="Resenchuk S.M."/>
            <person name="Andzhaparidze O.G."/>
            <person name="Sandakhchiev L.S."/>
        </authorList>
    </citation>
    <scope>NUCLEOTIDE SEQUENCE [GENOMIC DNA]</scope>
</reference>
<reference key="2">
    <citation type="journal article" date="1993" name="FEBS Lett.">
        <title>Genes of variola and vaccinia viruses necessary to overcome the host protective mechanisms.</title>
        <authorList>
            <person name="Shchelkunov S.N."/>
            <person name="Blinov V.M."/>
            <person name="Sandakhchiev L.S."/>
        </authorList>
    </citation>
    <scope>NUCLEOTIDE SEQUENCE [GENOMIC DNA]</scope>
</reference>